<keyword id="KW-0067">ATP-binding</keyword>
<keyword id="KW-0227">DNA damage</keyword>
<keyword id="KW-0234">DNA repair</keyword>
<keyword id="KW-0238">DNA-binding</keyword>
<keyword id="KW-0269">Exonuclease</keyword>
<keyword id="KW-0347">Helicase</keyword>
<keyword id="KW-0378">Hydrolase</keyword>
<keyword id="KW-0413">Isomerase</keyword>
<keyword id="KW-0540">Nuclease</keyword>
<keyword id="KW-0547">Nucleotide-binding</keyword>
<keyword id="KW-1185">Reference proteome</keyword>
<protein>
    <recommendedName>
        <fullName evidence="1">ATP-dependent helicase/nuclease subunit A</fullName>
        <ecNumber evidence="1">3.1.-.-</ecNumber>
        <ecNumber evidence="1">5.6.2.4</ecNumber>
    </recommendedName>
    <alternativeName>
        <fullName evidence="1">ATP-dependent helicase/nuclease AddA</fullName>
    </alternativeName>
    <alternativeName>
        <fullName evidence="1">DNA 3'-5' helicase AddA</fullName>
    </alternativeName>
</protein>
<evidence type="ECO:0000255" key="1">
    <source>
        <dbReference type="HAMAP-Rule" id="MF_01451"/>
    </source>
</evidence>
<accession>A8MJ41</accession>
<feature type="chain" id="PRO_0000379228" description="ATP-dependent helicase/nuclease subunit A">
    <location>
        <begin position="1"/>
        <end position="1197"/>
    </location>
</feature>
<feature type="domain" description="UvrD-like helicase ATP-binding" evidence="1">
    <location>
        <begin position="2"/>
        <end position="458"/>
    </location>
</feature>
<feature type="domain" description="UvrD-like helicase C-terminal" evidence="1">
    <location>
        <begin position="485"/>
        <end position="774"/>
    </location>
</feature>
<feature type="binding site" evidence="1">
    <location>
        <begin position="23"/>
        <end position="30"/>
    </location>
    <ligand>
        <name>ATP</name>
        <dbReference type="ChEBI" id="CHEBI:30616"/>
    </ligand>
</feature>
<proteinExistence type="inferred from homology"/>
<comment type="function">
    <text evidence="1">The heterodimer acts as both an ATP-dependent DNA helicase and an ATP-dependent, dual-direction single-stranded exonuclease. Recognizes the chi site generating a DNA molecule suitable for the initiation of homologous recombination. The AddA nuclease domain is required for chi fragment generation; this subunit has the helicase and 3' -&gt; 5' nuclease activities.</text>
</comment>
<comment type="catalytic activity">
    <reaction evidence="1">
        <text>Couples ATP hydrolysis with the unwinding of duplex DNA by translocating in the 3'-5' direction.</text>
        <dbReference type="EC" id="5.6.2.4"/>
    </reaction>
</comment>
<comment type="catalytic activity">
    <reaction evidence="1">
        <text>ATP + H2O = ADP + phosphate + H(+)</text>
        <dbReference type="Rhea" id="RHEA:13065"/>
        <dbReference type="ChEBI" id="CHEBI:15377"/>
        <dbReference type="ChEBI" id="CHEBI:15378"/>
        <dbReference type="ChEBI" id="CHEBI:30616"/>
        <dbReference type="ChEBI" id="CHEBI:43474"/>
        <dbReference type="ChEBI" id="CHEBI:456216"/>
        <dbReference type="EC" id="5.6.2.4"/>
    </reaction>
</comment>
<comment type="cofactor">
    <cofactor evidence="1">
        <name>Mg(2+)</name>
        <dbReference type="ChEBI" id="CHEBI:18420"/>
    </cofactor>
</comment>
<comment type="subunit">
    <text evidence="1">Heterodimer of AddA and AddB/RexB.</text>
</comment>
<comment type="similarity">
    <text evidence="1">Belongs to the helicase family. AddA subfamily.</text>
</comment>
<organism>
    <name type="scientific">Alkaliphilus oremlandii (strain OhILAs)</name>
    <name type="common">Clostridium oremlandii (strain OhILAs)</name>
    <dbReference type="NCBI Taxonomy" id="350688"/>
    <lineage>
        <taxon>Bacteria</taxon>
        <taxon>Bacillati</taxon>
        <taxon>Bacillota</taxon>
        <taxon>Clostridia</taxon>
        <taxon>Peptostreptococcales</taxon>
        <taxon>Natronincolaceae</taxon>
        <taxon>Alkaliphilus</taxon>
    </lineage>
</organism>
<reference key="1">
    <citation type="submission" date="2007-10" db="EMBL/GenBank/DDBJ databases">
        <title>Complete genome of Alkaliphilus oremlandii OhILAs.</title>
        <authorList>
            <person name="Copeland A."/>
            <person name="Lucas S."/>
            <person name="Lapidus A."/>
            <person name="Barry K."/>
            <person name="Detter J.C."/>
            <person name="Glavina del Rio T."/>
            <person name="Hammon N."/>
            <person name="Israni S."/>
            <person name="Dalin E."/>
            <person name="Tice H."/>
            <person name="Pitluck S."/>
            <person name="Chain P."/>
            <person name="Malfatti S."/>
            <person name="Shin M."/>
            <person name="Vergez L."/>
            <person name="Schmutz J."/>
            <person name="Larimer F."/>
            <person name="Land M."/>
            <person name="Hauser L."/>
            <person name="Kyrpides N."/>
            <person name="Mikhailova N."/>
            <person name="Stolz J.F."/>
            <person name="Dawson A."/>
            <person name="Fisher E."/>
            <person name="Crable B."/>
            <person name="Perera E."/>
            <person name="Lisak J."/>
            <person name="Ranganathan M."/>
            <person name="Basu P."/>
            <person name="Richardson P."/>
        </authorList>
    </citation>
    <scope>NUCLEOTIDE SEQUENCE [LARGE SCALE GENOMIC DNA]</scope>
    <source>
        <strain>OhILAs</strain>
    </source>
</reference>
<gene>
    <name evidence="1" type="primary">addA</name>
    <name type="ordered locus">Clos_2290</name>
</gene>
<name>ADDA_ALKOO</name>
<sequence>MRQWTKEQQAAIDARGSNLLVAAAAGSGKTAVLVERIIQIILKDRIDIDRLLIVTFTNAAAGEMRERIAGAIMTEMEKKTGGEEHLRRQLSLLNRASITTVHSFCIDVVRRHFHMIDVDPGFRIGDVTETSIMKLEALEELFEDEYEKGNEEFFNLVEAFGGTREDRPLQDLVLKIYGFIQSQPYPEIWLRERVEDFALSIEAFNQSPWIRTIKKRMGILLKGAMDLLEIAQTIALEPGGPDVYEEAILSDLDQIKELYHSLENPITDFYEQLNCINFIRLKTSKDSDPILKEECKDLRDKAKDIVKDIRENIFNVSPEEYVEDLNRLYPLMDYLYRLVIGFTERYTEKKTDKGIVDFNDLEHFALRILANDLAAQEYREKFEYIFVDEYQDSNIVQETLIQSIKREDNLFMVGDVKQSIYRFRLADPTLFIEKYETFGTEEGHINRRIDLAKNFRSRGQVLNGVNYIFKHMMSKELGEIDYDERAALYQGTEFEPIQDPSIEINLIEKNMEIDEEMEEELQELADIEVEARIVAKRIKALLNEEIYDPRVEGYRKIEYKDIVVLLRTTQNWAQSFLEVFVREGIPAYADANTGYFEAIEVNMFLNLLRVIDNKRQDIPLLSVMRSPIGDFTTEELIHIRVNDKTGTYYDAIEKYVEEKTDDLKYKLVSFIEKLNQWANDARYIKIDQFIWKLFMDTGYYYYVGAMPGGLQRQANLRVLFDRANQFEKTSIKGLFNFIKFIEKLQSSKGDMGAAKILGENDNVVRIMSIHKSKGLEFPVVITAGMGKNFNLRDTSADVLLHKDLGLGPKFTDPNLRTYRDTIAKLAMKDQIKIESLSEEMRILYVAFTRPKDKLIVVGSIRNIEKQVKKWSKADNVYSLMNAKNYLDWIGTALVKHPDGQALRELGGLGFDAASDGMEDSEWTINILGRQVIVLEEQDKVLKEEDYREKLLYFNREDFSSGGYTEYKEEIENRLNWKYDHPHSVQIPSKLSVSDIKKAHINEIDVIAHQIPILVKSPKFMEGKTTFTAAERGTVIHFVLQHLDLNKVGSEEDIREQIHWMVARELITEEESKVVDTKKILNYFYSPIGERMRKAKKVYRESPFIIEKSAGEVIEGLSDDIEDKLLVQGIIDCYFEEKDGLILIDYKNDIVLNGNIAAVVARYELQLSLYREALERITGREVKETYLYLFDVDQGVRL</sequence>
<dbReference type="EC" id="3.1.-.-" evidence="1"/>
<dbReference type="EC" id="5.6.2.4" evidence="1"/>
<dbReference type="EMBL" id="CP000853">
    <property type="protein sequence ID" value="ABW19823.1"/>
    <property type="molecule type" value="Genomic_DNA"/>
</dbReference>
<dbReference type="RefSeq" id="WP_012160130.1">
    <property type="nucleotide sequence ID" value="NC_009922.1"/>
</dbReference>
<dbReference type="SMR" id="A8MJ41"/>
<dbReference type="STRING" id="350688.Clos_2290"/>
<dbReference type="KEGG" id="aoe:Clos_2290"/>
<dbReference type="eggNOG" id="COG1074">
    <property type="taxonomic scope" value="Bacteria"/>
</dbReference>
<dbReference type="HOGENOM" id="CLU_001114_3_1_9"/>
<dbReference type="OrthoDB" id="9810135at2"/>
<dbReference type="Proteomes" id="UP000000269">
    <property type="component" value="Chromosome"/>
</dbReference>
<dbReference type="GO" id="GO:0005829">
    <property type="term" value="C:cytosol"/>
    <property type="evidence" value="ECO:0007669"/>
    <property type="project" value="TreeGrafter"/>
</dbReference>
<dbReference type="GO" id="GO:0033202">
    <property type="term" value="C:DNA helicase complex"/>
    <property type="evidence" value="ECO:0007669"/>
    <property type="project" value="TreeGrafter"/>
</dbReference>
<dbReference type="GO" id="GO:0043138">
    <property type="term" value="F:3'-5' DNA helicase activity"/>
    <property type="evidence" value="ECO:0007669"/>
    <property type="project" value="UniProtKB-UniRule"/>
</dbReference>
<dbReference type="GO" id="GO:0008408">
    <property type="term" value="F:3'-5' exonuclease activity"/>
    <property type="evidence" value="ECO:0007669"/>
    <property type="project" value="UniProtKB-UniRule"/>
</dbReference>
<dbReference type="GO" id="GO:0005524">
    <property type="term" value="F:ATP binding"/>
    <property type="evidence" value="ECO:0007669"/>
    <property type="project" value="UniProtKB-UniRule"/>
</dbReference>
<dbReference type="GO" id="GO:0016887">
    <property type="term" value="F:ATP hydrolysis activity"/>
    <property type="evidence" value="ECO:0007669"/>
    <property type="project" value="RHEA"/>
</dbReference>
<dbReference type="GO" id="GO:0003690">
    <property type="term" value="F:double-stranded DNA binding"/>
    <property type="evidence" value="ECO:0007669"/>
    <property type="project" value="UniProtKB-UniRule"/>
</dbReference>
<dbReference type="GO" id="GO:0000724">
    <property type="term" value="P:double-strand break repair via homologous recombination"/>
    <property type="evidence" value="ECO:0007669"/>
    <property type="project" value="UniProtKB-UniRule"/>
</dbReference>
<dbReference type="CDD" id="cd17932">
    <property type="entry name" value="DEXQc_UvrD"/>
    <property type="match status" value="1"/>
</dbReference>
<dbReference type="FunFam" id="3.40.50.300:FF:001236">
    <property type="entry name" value="ATP-dependent helicase/nuclease subunit A"/>
    <property type="match status" value="1"/>
</dbReference>
<dbReference type="Gene3D" id="3.90.320.10">
    <property type="match status" value="1"/>
</dbReference>
<dbReference type="Gene3D" id="3.40.50.300">
    <property type="entry name" value="P-loop containing nucleotide triphosphate hydrolases"/>
    <property type="match status" value="4"/>
</dbReference>
<dbReference type="HAMAP" id="MF_01451">
    <property type="entry name" value="AddA"/>
    <property type="match status" value="1"/>
</dbReference>
<dbReference type="InterPro" id="IPR014152">
    <property type="entry name" value="AddA"/>
</dbReference>
<dbReference type="InterPro" id="IPR014017">
    <property type="entry name" value="DNA_helicase_UvrD-like_C"/>
</dbReference>
<dbReference type="InterPro" id="IPR000212">
    <property type="entry name" value="DNA_helicase_UvrD/REP"/>
</dbReference>
<dbReference type="InterPro" id="IPR027417">
    <property type="entry name" value="P-loop_NTPase"/>
</dbReference>
<dbReference type="InterPro" id="IPR011604">
    <property type="entry name" value="PDDEXK-like_dom_sf"/>
</dbReference>
<dbReference type="InterPro" id="IPR038726">
    <property type="entry name" value="PDDEXK_AddAB-type"/>
</dbReference>
<dbReference type="InterPro" id="IPR011335">
    <property type="entry name" value="Restrct_endonuc-II-like"/>
</dbReference>
<dbReference type="InterPro" id="IPR014016">
    <property type="entry name" value="UvrD-like_ATP-bd"/>
</dbReference>
<dbReference type="NCBIfam" id="TIGR02785">
    <property type="entry name" value="addA_Gpos"/>
    <property type="match status" value="1"/>
</dbReference>
<dbReference type="PANTHER" id="PTHR11070:SF48">
    <property type="entry name" value="ATP-DEPENDENT HELICASE_NUCLEASE SUBUNIT A"/>
    <property type="match status" value="1"/>
</dbReference>
<dbReference type="PANTHER" id="PTHR11070">
    <property type="entry name" value="UVRD / RECB / PCRA DNA HELICASE FAMILY MEMBER"/>
    <property type="match status" value="1"/>
</dbReference>
<dbReference type="Pfam" id="PF12705">
    <property type="entry name" value="PDDEXK_1"/>
    <property type="match status" value="1"/>
</dbReference>
<dbReference type="Pfam" id="PF00580">
    <property type="entry name" value="UvrD-helicase"/>
    <property type="match status" value="1"/>
</dbReference>
<dbReference type="Pfam" id="PF13361">
    <property type="entry name" value="UvrD_C"/>
    <property type="match status" value="1"/>
</dbReference>
<dbReference type="SUPFAM" id="SSF52540">
    <property type="entry name" value="P-loop containing nucleoside triphosphate hydrolases"/>
    <property type="match status" value="1"/>
</dbReference>
<dbReference type="SUPFAM" id="SSF52980">
    <property type="entry name" value="Restriction endonuclease-like"/>
    <property type="match status" value="1"/>
</dbReference>
<dbReference type="PROSITE" id="PS51198">
    <property type="entry name" value="UVRD_HELICASE_ATP_BIND"/>
    <property type="match status" value="1"/>
</dbReference>
<dbReference type="PROSITE" id="PS51217">
    <property type="entry name" value="UVRD_HELICASE_CTER"/>
    <property type="match status" value="1"/>
</dbReference>